<protein>
    <recommendedName>
        <fullName evidence="12">Zinc transporter 7</fullName>
        <shortName evidence="10">ZnT-7</shortName>
    </recommendedName>
    <alternativeName>
        <fullName evidence="14">Solute carrier family 30 member 7</fullName>
    </alternativeName>
    <alternativeName>
        <fullName evidence="13">Znt-like transporter 2</fullName>
    </alternativeName>
</protein>
<gene>
    <name evidence="14" type="primary">SLC30A7</name>
    <name evidence="9" type="synonym">ZNT7</name>
    <name evidence="13" type="synonym">ZNTL2</name>
</gene>
<comment type="function">
    <text evidence="6 7">Zinc ion transporter mediating zinc entry from the cytosol into the lumen of organelles along the secretory pathway (PubMed:15525635, PubMed:15994300). By contributing to zinc ion homeostasis within the early secretory pathway, regulates the activation and folding of enzymes like alkaline phosphatases (PubMed:15525635, PubMed:15994300).</text>
</comment>
<comment type="catalytic activity">
    <reaction evidence="6 7">
        <text>Zn(2+)(in) = Zn(2+)(out)</text>
        <dbReference type="Rhea" id="RHEA:29351"/>
        <dbReference type="ChEBI" id="CHEBI:29105"/>
    </reaction>
</comment>
<comment type="subunit">
    <text evidence="7">Homooligomer.</text>
</comment>
<comment type="interaction">
    <interactant intactId="EBI-1043569">
        <id>Q8NEW0</id>
    </interactant>
    <interactant intactId="EBI-1043569">
        <id>Q8NEW0</id>
        <label>SLC30A7</label>
    </interactant>
    <organismsDiffer>false</organismsDiffer>
    <experiments>2</experiments>
</comment>
<comment type="subcellular location">
    <subcellularLocation>
        <location evidence="6">Golgi apparatus membrane</location>
        <topology evidence="3">Multi-pass membrane protein</topology>
    </subcellularLocation>
    <subcellularLocation>
        <location evidence="2">Cytoplasmic vesicle</location>
    </subcellularLocation>
    <subcellularLocation>
        <location evidence="2">Golgi apparatus</location>
        <location evidence="2">trans-Golgi network</location>
    </subcellularLocation>
    <subcellularLocation>
        <location evidence="1">Sarcoplasmic reticulum</location>
    </subcellularLocation>
    <subcellularLocation>
        <location evidence="1">Mitochondrion</location>
    </subcellularLocation>
</comment>
<comment type="tissue specificity">
    <text evidence="8">Highly expressed in megakaryocytes and other bone marrow cells and in the epithelium of the small intestine. Expressed in testis (in Leydig cells), adrenal gland (in adrenal medula, zona fasciculata and zona of reticularis), and pituitary gland (in somatotropic cells).</text>
</comment>
<comment type="induction">
    <text evidence="5">Increased intracellular zinc level, resulting from extracellular zinc supplementation, do not induce any up- or down-regulation of gene expression. Up-regulated by zinc depletion.</text>
</comment>
<comment type="disease" evidence="8">
    <disease id="DI-06757">
        <name>Ziegler-Huang syndrome</name>
        <acronym>ZHS</acronym>
        <description>A form of bone marrow failure syndrome, a heterogeneous group of life-threatening disorders characterized by hematopoietic defects in association with a range of variable extra-hematopoietic manifestations. ZHS is an autosomal recessive form characterized by growth retardation, testicular hypoplasia, and bone marrow failure with thrombocytopenia and macrocytic anemia appearing in childhood.</description>
        <dbReference type="MIM" id="620501"/>
    </disease>
    <text>The disease may be caused by variants affecting the gene represented in this entry.</text>
</comment>
<comment type="similarity">
    <text evidence="11">Belongs to the cation diffusion facilitator (CDF) transporter (TC 2.A.4) family. SLC30A subfamily.</text>
</comment>
<reference key="1">
    <citation type="journal article" date="2003" name="J. Biol. Chem.">
        <title>ZnT7, a novel mammalian zinc transporter, accumulates zinc in the Golgi apparatus.</title>
        <authorList>
            <person name="Kirschke C.P."/>
            <person name="Huang L."/>
        </authorList>
    </citation>
    <scope>NUCLEOTIDE SEQUENCE [MRNA]</scope>
</reference>
<reference key="2">
    <citation type="journal article" date="2004" name="Biochem. Pharmacol.">
        <title>Differential regulation of zinc efflux transporters ZnT-1, ZnT-5 and ZnT-7 gene expression by zinc levels: a real-time RT-PCR study.</title>
        <authorList>
            <person name="Devergnas S."/>
            <person name="Chimienti F."/>
            <person name="Naud N."/>
            <person name="Pennequin A."/>
            <person name="Coquerel Y."/>
            <person name="Chantegrel J."/>
            <person name="Favier A."/>
            <person name="Seve M."/>
        </authorList>
    </citation>
    <scope>NUCLEOTIDE SEQUENCE [MRNA]</scope>
    <scope>INDUCTION</scope>
</reference>
<reference key="3">
    <citation type="submission" date="2000-02" db="EMBL/GenBank/DDBJ databases">
        <title>Cloning of new mammalian zinc transporter-like genes.</title>
        <authorList>
            <person name="Zhu W."/>
            <person name="Mager S."/>
        </authorList>
    </citation>
    <scope>NUCLEOTIDE SEQUENCE [MRNA]</scope>
    <source>
        <tissue>Brain</tissue>
    </source>
</reference>
<reference key="4">
    <citation type="journal article" date="2004" name="Nat. Genet.">
        <title>Complete sequencing and characterization of 21,243 full-length human cDNAs.</title>
        <authorList>
            <person name="Ota T."/>
            <person name="Suzuki Y."/>
            <person name="Nishikawa T."/>
            <person name="Otsuki T."/>
            <person name="Sugiyama T."/>
            <person name="Irie R."/>
            <person name="Wakamatsu A."/>
            <person name="Hayashi K."/>
            <person name="Sato H."/>
            <person name="Nagai K."/>
            <person name="Kimura K."/>
            <person name="Makita H."/>
            <person name="Sekine M."/>
            <person name="Obayashi M."/>
            <person name="Nishi T."/>
            <person name="Shibahara T."/>
            <person name="Tanaka T."/>
            <person name="Ishii S."/>
            <person name="Yamamoto J."/>
            <person name="Saito K."/>
            <person name="Kawai Y."/>
            <person name="Isono Y."/>
            <person name="Nakamura Y."/>
            <person name="Nagahari K."/>
            <person name="Murakami K."/>
            <person name="Yasuda T."/>
            <person name="Iwayanagi T."/>
            <person name="Wagatsuma M."/>
            <person name="Shiratori A."/>
            <person name="Sudo H."/>
            <person name="Hosoiri T."/>
            <person name="Kaku Y."/>
            <person name="Kodaira H."/>
            <person name="Kondo H."/>
            <person name="Sugawara M."/>
            <person name="Takahashi M."/>
            <person name="Kanda K."/>
            <person name="Yokoi T."/>
            <person name="Furuya T."/>
            <person name="Kikkawa E."/>
            <person name="Omura Y."/>
            <person name="Abe K."/>
            <person name="Kamihara K."/>
            <person name="Katsuta N."/>
            <person name="Sato K."/>
            <person name="Tanikawa M."/>
            <person name="Yamazaki M."/>
            <person name="Ninomiya K."/>
            <person name="Ishibashi T."/>
            <person name="Yamashita H."/>
            <person name="Murakawa K."/>
            <person name="Fujimori K."/>
            <person name="Tanai H."/>
            <person name="Kimata M."/>
            <person name="Watanabe M."/>
            <person name="Hiraoka S."/>
            <person name="Chiba Y."/>
            <person name="Ishida S."/>
            <person name="Ono Y."/>
            <person name="Takiguchi S."/>
            <person name="Watanabe S."/>
            <person name="Yosida M."/>
            <person name="Hotuta T."/>
            <person name="Kusano J."/>
            <person name="Kanehori K."/>
            <person name="Takahashi-Fujii A."/>
            <person name="Hara H."/>
            <person name="Tanase T.-O."/>
            <person name="Nomura Y."/>
            <person name="Togiya S."/>
            <person name="Komai F."/>
            <person name="Hara R."/>
            <person name="Takeuchi K."/>
            <person name="Arita M."/>
            <person name="Imose N."/>
            <person name="Musashino K."/>
            <person name="Yuuki H."/>
            <person name="Oshima A."/>
            <person name="Sasaki N."/>
            <person name="Aotsuka S."/>
            <person name="Yoshikawa Y."/>
            <person name="Matsunawa H."/>
            <person name="Ichihara T."/>
            <person name="Shiohata N."/>
            <person name="Sano S."/>
            <person name="Moriya S."/>
            <person name="Momiyama H."/>
            <person name="Satoh N."/>
            <person name="Takami S."/>
            <person name="Terashima Y."/>
            <person name="Suzuki O."/>
            <person name="Nakagawa S."/>
            <person name="Senoh A."/>
            <person name="Mizoguchi H."/>
            <person name="Goto Y."/>
            <person name="Shimizu F."/>
            <person name="Wakebe H."/>
            <person name="Hishigaki H."/>
            <person name="Watanabe T."/>
            <person name="Sugiyama A."/>
            <person name="Takemoto M."/>
            <person name="Kawakami B."/>
            <person name="Yamazaki M."/>
            <person name="Watanabe K."/>
            <person name="Kumagai A."/>
            <person name="Itakura S."/>
            <person name="Fukuzumi Y."/>
            <person name="Fujimori Y."/>
            <person name="Komiyama M."/>
            <person name="Tashiro H."/>
            <person name="Tanigami A."/>
            <person name="Fujiwara T."/>
            <person name="Ono T."/>
            <person name="Yamada K."/>
            <person name="Fujii Y."/>
            <person name="Ozaki K."/>
            <person name="Hirao M."/>
            <person name="Ohmori Y."/>
            <person name="Kawabata A."/>
            <person name="Hikiji T."/>
            <person name="Kobatake N."/>
            <person name="Inagaki H."/>
            <person name="Ikema Y."/>
            <person name="Okamoto S."/>
            <person name="Okitani R."/>
            <person name="Kawakami T."/>
            <person name="Noguchi S."/>
            <person name="Itoh T."/>
            <person name="Shigeta K."/>
            <person name="Senba T."/>
            <person name="Matsumura K."/>
            <person name="Nakajima Y."/>
            <person name="Mizuno T."/>
            <person name="Morinaga M."/>
            <person name="Sasaki M."/>
            <person name="Togashi T."/>
            <person name="Oyama M."/>
            <person name="Hata H."/>
            <person name="Watanabe M."/>
            <person name="Komatsu T."/>
            <person name="Mizushima-Sugano J."/>
            <person name="Satoh T."/>
            <person name="Shirai Y."/>
            <person name="Takahashi Y."/>
            <person name="Nakagawa K."/>
            <person name="Okumura K."/>
            <person name="Nagase T."/>
            <person name="Nomura N."/>
            <person name="Kikuchi H."/>
            <person name="Masuho Y."/>
            <person name="Yamashita R."/>
            <person name="Nakai K."/>
            <person name="Yada T."/>
            <person name="Nakamura Y."/>
            <person name="Ohara O."/>
            <person name="Isogai T."/>
            <person name="Sugano S."/>
        </authorList>
    </citation>
    <scope>NUCLEOTIDE SEQUENCE [LARGE SCALE MRNA]</scope>
    <source>
        <tissue>Trachea</tissue>
    </source>
</reference>
<reference key="5">
    <citation type="journal article" date="2007" name="BMC Genomics">
        <title>The full-ORF clone resource of the German cDNA consortium.</title>
        <authorList>
            <person name="Bechtel S."/>
            <person name="Rosenfelder H."/>
            <person name="Duda A."/>
            <person name="Schmidt C.P."/>
            <person name="Ernst U."/>
            <person name="Wellenreuther R."/>
            <person name="Mehrle A."/>
            <person name="Schuster C."/>
            <person name="Bahr A."/>
            <person name="Bloecker H."/>
            <person name="Heubner D."/>
            <person name="Hoerlein A."/>
            <person name="Michel G."/>
            <person name="Wedler H."/>
            <person name="Koehrer K."/>
            <person name="Ottenwaelder B."/>
            <person name="Poustka A."/>
            <person name="Wiemann S."/>
            <person name="Schupp I."/>
        </authorList>
    </citation>
    <scope>NUCLEOTIDE SEQUENCE [LARGE SCALE MRNA]</scope>
    <source>
        <tissue>Fetal kidney</tissue>
    </source>
</reference>
<reference key="6">
    <citation type="journal article" date="2006" name="Nature">
        <title>The DNA sequence and biological annotation of human chromosome 1.</title>
        <authorList>
            <person name="Gregory S.G."/>
            <person name="Barlow K.F."/>
            <person name="McLay K.E."/>
            <person name="Kaul R."/>
            <person name="Swarbreck D."/>
            <person name="Dunham A."/>
            <person name="Scott C.E."/>
            <person name="Howe K.L."/>
            <person name="Woodfine K."/>
            <person name="Spencer C.C.A."/>
            <person name="Jones M.C."/>
            <person name="Gillson C."/>
            <person name="Searle S."/>
            <person name="Zhou Y."/>
            <person name="Kokocinski F."/>
            <person name="McDonald L."/>
            <person name="Evans R."/>
            <person name="Phillips K."/>
            <person name="Atkinson A."/>
            <person name="Cooper R."/>
            <person name="Jones C."/>
            <person name="Hall R.E."/>
            <person name="Andrews T.D."/>
            <person name="Lloyd C."/>
            <person name="Ainscough R."/>
            <person name="Almeida J.P."/>
            <person name="Ambrose K.D."/>
            <person name="Anderson F."/>
            <person name="Andrew R.W."/>
            <person name="Ashwell R.I.S."/>
            <person name="Aubin K."/>
            <person name="Babbage A.K."/>
            <person name="Bagguley C.L."/>
            <person name="Bailey J."/>
            <person name="Beasley H."/>
            <person name="Bethel G."/>
            <person name="Bird C.P."/>
            <person name="Bray-Allen S."/>
            <person name="Brown J.Y."/>
            <person name="Brown A.J."/>
            <person name="Buckley D."/>
            <person name="Burton J."/>
            <person name="Bye J."/>
            <person name="Carder C."/>
            <person name="Chapman J.C."/>
            <person name="Clark S.Y."/>
            <person name="Clarke G."/>
            <person name="Clee C."/>
            <person name="Cobley V."/>
            <person name="Collier R.E."/>
            <person name="Corby N."/>
            <person name="Coville G.J."/>
            <person name="Davies J."/>
            <person name="Deadman R."/>
            <person name="Dunn M."/>
            <person name="Earthrowl M."/>
            <person name="Ellington A.G."/>
            <person name="Errington H."/>
            <person name="Frankish A."/>
            <person name="Frankland J."/>
            <person name="French L."/>
            <person name="Garner P."/>
            <person name="Garnett J."/>
            <person name="Gay L."/>
            <person name="Ghori M.R.J."/>
            <person name="Gibson R."/>
            <person name="Gilby L.M."/>
            <person name="Gillett W."/>
            <person name="Glithero R.J."/>
            <person name="Grafham D.V."/>
            <person name="Griffiths C."/>
            <person name="Griffiths-Jones S."/>
            <person name="Grocock R."/>
            <person name="Hammond S."/>
            <person name="Harrison E.S.I."/>
            <person name="Hart E."/>
            <person name="Haugen E."/>
            <person name="Heath P.D."/>
            <person name="Holmes S."/>
            <person name="Holt K."/>
            <person name="Howden P.J."/>
            <person name="Hunt A.R."/>
            <person name="Hunt S.E."/>
            <person name="Hunter G."/>
            <person name="Isherwood J."/>
            <person name="James R."/>
            <person name="Johnson C."/>
            <person name="Johnson D."/>
            <person name="Joy A."/>
            <person name="Kay M."/>
            <person name="Kershaw J.K."/>
            <person name="Kibukawa M."/>
            <person name="Kimberley A.M."/>
            <person name="King A."/>
            <person name="Knights A.J."/>
            <person name="Lad H."/>
            <person name="Laird G."/>
            <person name="Lawlor S."/>
            <person name="Leongamornlert D.A."/>
            <person name="Lloyd D.M."/>
            <person name="Loveland J."/>
            <person name="Lovell J."/>
            <person name="Lush M.J."/>
            <person name="Lyne R."/>
            <person name="Martin S."/>
            <person name="Mashreghi-Mohammadi M."/>
            <person name="Matthews L."/>
            <person name="Matthews N.S.W."/>
            <person name="McLaren S."/>
            <person name="Milne S."/>
            <person name="Mistry S."/>
            <person name="Moore M.J.F."/>
            <person name="Nickerson T."/>
            <person name="O'Dell C.N."/>
            <person name="Oliver K."/>
            <person name="Palmeiri A."/>
            <person name="Palmer S.A."/>
            <person name="Parker A."/>
            <person name="Patel D."/>
            <person name="Pearce A.V."/>
            <person name="Peck A.I."/>
            <person name="Pelan S."/>
            <person name="Phelps K."/>
            <person name="Phillimore B.J."/>
            <person name="Plumb R."/>
            <person name="Rajan J."/>
            <person name="Raymond C."/>
            <person name="Rouse G."/>
            <person name="Saenphimmachak C."/>
            <person name="Sehra H.K."/>
            <person name="Sheridan E."/>
            <person name="Shownkeen R."/>
            <person name="Sims S."/>
            <person name="Skuce C.D."/>
            <person name="Smith M."/>
            <person name="Steward C."/>
            <person name="Subramanian S."/>
            <person name="Sycamore N."/>
            <person name="Tracey A."/>
            <person name="Tromans A."/>
            <person name="Van Helmond Z."/>
            <person name="Wall M."/>
            <person name="Wallis J.M."/>
            <person name="White S."/>
            <person name="Whitehead S.L."/>
            <person name="Wilkinson J.E."/>
            <person name="Willey D.L."/>
            <person name="Williams H."/>
            <person name="Wilming L."/>
            <person name="Wray P.W."/>
            <person name="Wu Z."/>
            <person name="Coulson A."/>
            <person name="Vaudin M."/>
            <person name="Sulston J.E."/>
            <person name="Durbin R.M."/>
            <person name="Hubbard T."/>
            <person name="Wooster R."/>
            <person name="Dunham I."/>
            <person name="Carter N.P."/>
            <person name="McVean G."/>
            <person name="Ross M.T."/>
            <person name="Harrow J."/>
            <person name="Olson M.V."/>
            <person name="Beck S."/>
            <person name="Rogers J."/>
            <person name="Bentley D.R."/>
        </authorList>
    </citation>
    <scope>NUCLEOTIDE SEQUENCE [LARGE SCALE GENOMIC DNA]</scope>
</reference>
<reference key="7">
    <citation type="submission" date="2005-09" db="EMBL/GenBank/DDBJ databases">
        <authorList>
            <person name="Mural R.J."/>
            <person name="Istrail S."/>
            <person name="Sutton G.G."/>
            <person name="Florea L."/>
            <person name="Halpern A.L."/>
            <person name="Mobarry C.M."/>
            <person name="Lippert R."/>
            <person name="Walenz B."/>
            <person name="Shatkay H."/>
            <person name="Dew I."/>
            <person name="Miller J.R."/>
            <person name="Flanigan M.J."/>
            <person name="Edwards N.J."/>
            <person name="Bolanos R."/>
            <person name="Fasulo D."/>
            <person name="Halldorsson B.V."/>
            <person name="Hannenhalli S."/>
            <person name="Turner R."/>
            <person name="Yooseph S."/>
            <person name="Lu F."/>
            <person name="Nusskern D.R."/>
            <person name="Shue B.C."/>
            <person name="Zheng X.H."/>
            <person name="Zhong F."/>
            <person name="Delcher A.L."/>
            <person name="Huson D.H."/>
            <person name="Kravitz S.A."/>
            <person name="Mouchard L."/>
            <person name="Reinert K."/>
            <person name="Remington K.A."/>
            <person name="Clark A.G."/>
            <person name="Waterman M.S."/>
            <person name="Eichler E.E."/>
            <person name="Adams M.D."/>
            <person name="Hunkapiller M.W."/>
            <person name="Myers E.W."/>
            <person name="Venter J.C."/>
        </authorList>
    </citation>
    <scope>NUCLEOTIDE SEQUENCE [LARGE SCALE GENOMIC DNA]</scope>
</reference>
<reference key="8">
    <citation type="journal article" date="2004" name="Genome Res.">
        <title>The status, quality, and expansion of the NIH full-length cDNA project: the Mammalian Gene Collection (MGC).</title>
        <authorList>
            <consortium name="The MGC Project Team"/>
        </authorList>
    </citation>
    <scope>NUCLEOTIDE SEQUENCE [LARGE SCALE MRNA]</scope>
    <source>
        <tissue>Placenta</tissue>
    </source>
</reference>
<reference key="9">
    <citation type="journal article" date="2005" name="J. Biol. Chem.">
        <title>Zinc transporters, ZnT5 and ZnT7, are required for the activation of alkaline phosphatases, zinc-requiring enzymes that are glycosylphosphatidylinositol-anchored to the cytoplasmic membrane.</title>
        <authorList>
            <person name="Suzuki T."/>
            <person name="Ishihara K."/>
            <person name="Migaki H."/>
            <person name="Matsuura W."/>
            <person name="Kohda A."/>
            <person name="Okumura K."/>
            <person name="Nagao M."/>
            <person name="Yamaguchi-Iwai Y."/>
            <person name="Kambe T."/>
        </authorList>
    </citation>
    <scope>FUNCTION</scope>
    <scope>TRANSPORTER ACTIVITY</scope>
    <scope>SUBCELLULAR LOCATION</scope>
</reference>
<reference key="10">
    <citation type="journal article" date="2005" name="J. Biol. Chem.">
        <title>Two different zinc transport complexes of cation diffusion facilitator proteins localized in the secretory pathway operate to activate alkaline phosphatases in vertebrate cells.</title>
        <authorList>
            <person name="Suzuki T."/>
            <person name="Ishihara K."/>
            <person name="Migaki H."/>
            <person name="Ishihara K."/>
            <person name="Nagao M."/>
            <person name="Yamaguchi-Iwai Y."/>
            <person name="Kambe T."/>
        </authorList>
    </citation>
    <scope>FUNCTION</scope>
    <scope>TRANSPORTER ACTIVITY</scope>
    <scope>SUBUNIT</scope>
</reference>
<reference key="11">
    <citation type="journal article" date="2023" name="Hum. Mol. Genet.">
        <title>Identification of novel compound heterozygous variants in the SLC30A7 (ZNT7) gene in two French brothers with stunted growth, testicular hypoplasia and bone marrow failure.</title>
        <authorList>
            <person name="Huang L."/>
            <person name="Yang Z."/>
            <person name="Kirschke C.P."/>
            <person name="Prouteau C."/>
            <person name="Copin M.C."/>
            <person name="Bonneau D."/>
            <person name="Pellier I."/>
            <person name="Coutant R."/>
            <person name="Miot C."/>
            <person name="Ziegler A."/>
        </authorList>
    </citation>
    <scope>INVOLVEMENT IN ZHS</scope>
    <scope>TISSUE SPECIFICITY</scope>
</reference>
<accession>Q8NEW0</accession>
<accession>B2R949</accession>
<accession>D3DT61</accession>
<accession>Q8TCH2</accession>
<feature type="chain" id="PRO_0000314299" description="Zinc transporter 7">
    <location>
        <begin position="1"/>
        <end position="376"/>
    </location>
</feature>
<feature type="topological domain" description="Cytoplasmic" evidence="11">
    <location>
        <begin position="1"/>
        <end position="37"/>
    </location>
</feature>
<feature type="transmembrane region" description="Helical" evidence="3">
    <location>
        <begin position="38"/>
        <end position="58"/>
    </location>
</feature>
<feature type="topological domain" description="Lumenal" evidence="11">
    <location>
        <begin position="59"/>
        <end position="67"/>
    </location>
</feature>
<feature type="transmembrane region" description="Helical" evidence="3">
    <location>
        <begin position="68"/>
        <end position="88"/>
    </location>
</feature>
<feature type="topological domain" description="Cytoplasmic" evidence="11">
    <location>
        <begin position="89"/>
        <end position="102"/>
    </location>
</feature>
<feature type="transmembrane region" description="Helical" evidence="3">
    <location>
        <begin position="103"/>
        <end position="123"/>
    </location>
</feature>
<feature type="topological domain" description="Lumenal" evidence="11">
    <location>
        <begin position="124"/>
        <end position="140"/>
    </location>
</feature>
<feature type="transmembrane region" description="Helical" evidence="3">
    <location>
        <begin position="141"/>
        <end position="161"/>
    </location>
</feature>
<feature type="topological domain" description="Cytoplasmic" evidence="11">
    <location>
        <begin position="162"/>
        <end position="236"/>
    </location>
</feature>
<feature type="transmembrane region" description="Helical" evidence="3">
    <location>
        <begin position="237"/>
        <end position="257"/>
    </location>
</feature>
<feature type="topological domain" description="Lumenal" evidence="11">
    <location>
        <begin position="258"/>
        <end position="262"/>
    </location>
</feature>
<feature type="transmembrane region" description="Helical" evidence="3">
    <location>
        <begin position="263"/>
        <end position="283"/>
    </location>
</feature>
<feature type="topological domain" description="Cytoplasmic" evidence="11">
    <location>
        <begin position="284"/>
        <end position="376"/>
    </location>
</feature>
<feature type="region of interest" description="His-rich loop">
    <location>
        <begin position="161"/>
        <end position="218"/>
    </location>
</feature>
<feature type="region of interest" description="Disordered" evidence="4">
    <location>
        <begin position="194"/>
        <end position="226"/>
    </location>
</feature>
<feature type="compositionally biased region" description="Basic and acidic residues" evidence="4">
    <location>
        <begin position="194"/>
        <end position="222"/>
    </location>
</feature>
<feature type="sequence conflict" description="In Ref. 3; AAL83716." evidence="11" ref="3">
    <original>R</original>
    <variation>G</variation>
    <location>
        <position position="91"/>
    </location>
</feature>
<feature type="sequence conflict" description="In Ref. 3; AAL83716." evidence="11" ref="3">
    <original>V</original>
    <variation>A</variation>
    <location>
        <position position="318"/>
    </location>
</feature>
<feature type="helix" evidence="15">
    <location>
        <begin position="23"/>
        <end position="31"/>
    </location>
</feature>
<feature type="helix" evidence="15">
    <location>
        <begin position="33"/>
        <end position="58"/>
    </location>
</feature>
<feature type="helix" evidence="15">
    <location>
        <begin position="63"/>
        <end position="88"/>
    </location>
</feature>
<feature type="strand" evidence="15">
    <location>
        <begin position="94"/>
        <end position="96"/>
    </location>
</feature>
<feature type="turn" evidence="16">
    <location>
        <begin position="97"/>
        <end position="101"/>
    </location>
</feature>
<feature type="helix" evidence="15">
    <location>
        <begin position="102"/>
        <end position="130"/>
    </location>
</feature>
<feature type="helix" evidence="15">
    <location>
        <begin position="143"/>
        <end position="158"/>
    </location>
</feature>
<feature type="turn" evidence="15">
    <location>
        <begin position="159"/>
        <end position="162"/>
    </location>
</feature>
<feature type="helix" evidence="15">
    <location>
        <begin position="231"/>
        <end position="260"/>
    </location>
</feature>
<feature type="helix" evidence="15">
    <location>
        <begin position="266"/>
        <end position="293"/>
    </location>
</feature>
<feature type="helix" evidence="15">
    <location>
        <begin position="299"/>
        <end position="302"/>
    </location>
</feature>
<feature type="helix" evidence="15">
    <location>
        <begin position="305"/>
        <end position="313"/>
    </location>
</feature>
<feature type="strand" evidence="15">
    <location>
        <begin position="318"/>
        <end position="330"/>
    </location>
</feature>
<feature type="strand" evidence="15">
    <location>
        <begin position="333"/>
        <end position="342"/>
    </location>
</feature>
<feature type="helix" evidence="15">
    <location>
        <begin position="348"/>
        <end position="361"/>
    </location>
</feature>
<feature type="strand" evidence="15">
    <location>
        <begin position="365"/>
        <end position="373"/>
    </location>
</feature>
<organism>
    <name type="scientific">Homo sapiens</name>
    <name type="common">Human</name>
    <dbReference type="NCBI Taxonomy" id="9606"/>
    <lineage>
        <taxon>Eukaryota</taxon>
        <taxon>Metazoa</taxon>
        <taxon>Chordata</taxon>
        <taxon>Craniata</taxon>
        <taxon>Vertebrata</taxon>
        <taxon>Euteleostomi</taxon>
        <taxon>Mammalia</taxon>
        <taxon>Eutheria</taxon>
        <taxon>Euarchontoglires</taxon>
        <taxon>Primates</taxon>
        <taxon>Haplorrhini</taxon>
        <taxon>Catarrhini</taxon>
        <taxon>Hominidae</taxon>
        <taxon>Homo</taxon>
    </lineage>
</organism>
<keyword id="KW-0002">3D-structure</keyword>
<keyword id="KW-0968">Cytoplasmic vesicle</keyword>
<keyword id="KW-0333">Golgi apparatus</keyword>
<keyword id="KW-0406">Ion transport</keyword>
<keyword id="KW-0472">Membrane</keyword>
<keyword id="KW-0496">Mitochondrion</keyword>
<keyword id="KW-1267">Proteomics identification</keyword>
<keyword id="KW-1185">Reference proteome</keyword>
<keyword id="KW-0703">Sarcoplasmic reticulum</keyword>
<keyword id="KW-0812">Transmembrane</keyword>
<keyword id="KW-1133">Transmembrane helix</keyword>
<keyword id="KW-0813">Transport</keyword>
<keyword id="KW-0862">Zinc</keyword>
<keyword id="KW-0864">Zinc transport</keyword>
<dbReference type="EMBL" id="AF529197">
    <property type="protein sequence ID" value="AAO17324.1"/>
    <property type="molecule type" value="mRNA"/>
</dbReference>
<dbReference type="EMBL" id="AY094606">
    <property type="protein sequence ID" value="AAM21969.1"/>
    <property type="molecule type" value="mRNA"/>
</dbReference>
<dbReference type="EMBL" id="AF233345">
    <property type="protein sequence ID" value="AAL83716.1"/>
    <property type="molecule type" value="mRNA"/>
</dbReference>
<dbReference type="EMBL" id="AK313638">
    <property type="protein sequence ID" value="BAG36396.1"/>
    <property type="molecule type" value="mRNA"/>
</dbReference>
<dbReference type="EMBL" id="BX537375">
    <property type="protein sequence ID" value="CAD97617.1"/>
    <property type="molecule type" value="mRNA"/>
</dbReference>
<dbReference type="EMBL" id="AC104506">
    <property type="status" value="NOT_ANNOTATED_CDS"/>
    <property type="molecule type" value="Genomic_DNA"/>
</dbReference>
<dbReference type="EMBL" id="AL732465">
    <property type="status" value="NOT_ANNOTATED_CDS"/>
    <property type="molecule type" value="Genomic_DNA"/>
</dbReference>
<dbReference type="EMBL" id="CH471097">
    <property type="protein sequence ID" value="EAW72942.1"/>
    <property type="molecule type" value="Genomic_DNA"/>
</dbReference>
<dbReference type="EMBL" id="CH471097">
    <property type="protein sequence ID" value="EAW72943.1"/>
    <property type="molecule type" value="Genomic_DNA"/>
</dbReference>
<dbReference type="EMBL" id="BC064692">
    <property type="protein sequence ID" value="AAH64692.1"/>
    <property type="molecule type" value="mRNA"/>
</dbReference>
<dbReference type="CCDS" id="CCDS776.1"/>
<dbReference type="RefSeq" id="NP_001138356.1">
    <property type="nucleotide sequence ID" value="NM_001144884.2"/>
</dbReference>
<dbReference type="RefSeq" id="NP_598003.2">
    <property type="nucleotide sequence ID" value="NM_133496.4"/>
</dbReference>
<dbReference type="RefSeq" id="XP_016855889.1">
    <property type="nucleotide sequence ID" value="XM_017000400.3"/>
</dbReference>
<dbReference type="RefSeq" id="XP_054190581.1">
    <property type="nucleotide sequence ID" value="XM_054334606.1"/>
</dbReference>
<dbReference type="PDB" id="8J7T">
    <property type="method" value="EM"/>
    <property type="resolution" value="2.20 A"/>
    <property type="chains" value="A/B=1-376"/>
</dbReference>
<dbReference type="PDB" id="8J7U">
    <property type="method" value="EM"/>
    <property type="resolution" value="3.12 A"/>
    <property type="chains" value="A/B=1-376"/>
</dbReference>
<dbReference type="PDB" id="8J7V">
    <property type="method" value="EM"/>
    <property type="resolution" value="2.79 A"/>
    <property type="chains" value="A/B=1-376"/>
</dbReference>
<dbReference type="PDB" id="8J7W">
    <property type="method" value="EM"/>
    <property type="resolution" value="2.92 A"/>
    <property type="chains" value="A/B=1-376"/>
</dbReference>
<dbReference type="PDB" id="8J7X">
    <property type="method" value="EM"/>
    <property type="resolution" value="3.40 A"/>
    <property type="chains" value="A/B=1-376"/>
</dbReference>
<dbReference type="PDB" id="8J7Y">
    <property type="method" value="EM"/>
    <property type="resolution" value="3.40 A"/>
    <property type="chains" value="A/B=1-376"/>
</dbReference>
<dbReference type="PDB" id="8J80">
    <property type="method" value="EM"/>
    <property type="resolution" value="2.68 A"/>
    <property type="chains" value="A/B=1-376"/>
</dbReference>
<dbReference type="PDBsum" id="8J7T"/>
<dbReference type="PDBsum" id="8J7U"/>
<dbReference type="PDBsum" id="8J7V"/>
<dbReference type="PDBsum" id="8J7W"/>
<dbReference type="PDBsum" id="8J7X"/>
<dbReference type="PDBsum" id="8J7Y"/>
<dbReference type="PDBsum" id="8J80"/>
<dbReference type="EMDB" id="EMD-36048"/>
<dbReference type="EMDB" id="EMD-36049"/>
<dbReference type="EMDB" id="EMD-36050"/>
<dbReference type="EMDB" id="EMD-36051"/>
<dbReference type="EMDB" id="EMD-36052"/>
<dbReference type="EMDB" id="EMD-36053"/>
<dbReference type="EMDB" id="EMD-36055"/>
<dbReference type="SMR" id="Q8NEW0"/>
<dbReference type="BioGRID" id="127176">
    <property type="interactions" value="121"/>
</dbReference>
<dbReference type="ComplexPortal" id="CPX-8444">
    <property type="entry name" value="ZNT7 proton-coupled zinc antiporter complex"/>
</dbReference>
<dbReference type="FunCoup" id="Q8NEW0">
    <property type="interactions" value="2212"/>
</dbReference>
<dbReference type="IntAct" id="Q8NEW0">
    <property type="interactions" value="66"/>
</dbReference>
<dbReference type="MINT" id="Q8NEW0"/>
<dbReference type="STRING" id="9606.ENSP00000350278"/>
<dbReference type="DrugBank" id="DB14533">
    <property type="generic name" value="Zinc chloride"/>
</dbReference>
<dbReference type="DrugBank" id="DB14548">
    <property type="generic name" value="Zinc sulfate, unspecified form"/>
</dbReference>
<dbReference type="TCDB" id="2.A.4.4.5">
    <property type="family name" value="the cation diffusion facilitator (cdf) family"/>
</dbReference>
<dbReference type="GlyGen" id="Q8NEW0">
    <property type="glycosylation" value="1 site, 1 O-linked glycan (1 site)"/>
</dbReference>
<dbReference type="iPTMnet" id="Q8NEW0"/>
<dbReference type="PhosphoSitePlus" id="Q8NEW0"/>
<dbReference type="SwissPalm" id="Q8NEW0"/>
<dbReference type="BioMuta" id="SLC30A7"/>
<dbReference type="DMDM" id="74751261"/>
<dbReference type="jPOST" id="Q8NEW0"/>
<dbReference type="MassIVE" id="Q8NEW0"/>
<dbReference type="PaxDb" id="9606-ENSP00000359130"/>
<dbReference type="PeptideAtlas" id="Q8NEW0"/>
<dbReference type="ProteomicsDB" id="73224"/>
<dbReference type="Pumba" id="Q8NEW0"/>
<dbReference type="Antibodypedia" id="20006">
    <property type="antibodies" value="76 antibodies from 17 providers"/>
</dbReference>
<dbReference type="DNASU" id="148867"/>
<dbReference type="Ensembl" id="ENST00000357650.9">
    <property type="protein sequence ID" value="ENSP00000350278.4"/>
    <property type="gene ID" value="ENSG00000162695.13"/>
</dbReference>
<dbReference type="Ensembl" id="ENST00000370112.8">
    <property type="protein sequence ID" value="ENSP00000359130.4"/>
    <property type="gene ID" value="ENSG00000162695.13"/>
</dbReference>
<dbReference type="Ensembl" id="ENST00000850622.1">
    <property type="protein sequence ID" value="ENSP00000520907.1"/>
    <property type="gene ID" value="ENSG00000162695.13"/>
</dbReference>
<dbReference type="GeneID" id="148867"/>
<dbReference type="KEGG" id="hsa:148867"/>
<dbReference type="MANE-Select" id="ENST00000357650.9">
    <property type="protein sequence ID" value="ENSP00000350278.4"/>
    <property type="RefSeq nucleotide sequence ID" value="NM_133496.5"/>
    <property type="RefSeq protein sequence ID" value="NP_598003.2"/>
</dbReference>
<dbReference type="UCSC" id="uc001dtn.3">
    <property type="organism name" value="human"/>
</dbReference>
<dbReference type="AGR" id="HGNC:19306"/>
<dbReference type="CTD" id="148867"/>
<dbReference type="DisGeNET" id="148867"/>
<dbReference type="GeneCards" id="SLC30A7"/>
<dbReference type="HGNC" id="HGNC:19306">
    <property type="gene designation" value="SLC30A7"/>
</dbReference>
<dbReference type="HPA" id="ENSG00000162695">
    <property type="expression patterns" value="Low tissue specificity"/>
</dbReference>
<dbReference type="MalaCards" id="SLC30A7"/>
<dbReference type="MIM" id="611149">
    <property type="type" value="gene"/>
</dbReference>
<dbReference type="MIM" id="620501">
    <property type="type" value="phenotype"/>
</dbReference>
<dbReference type="neXtProt" id="NX_Q8NEW0"/>
<dbReference type="OpenTargets" id="ENSG00000162695"/>
<dbReference type="PharmGKB" id="PA134891595"/>
<dbReference type="VEuPathDB" id="HostDB:ENSG00000162695"/>
<dbReference type="eggNOG" id="KOG1484">
    <property type="taxonomic scope" value="Eukaryota"/>
</dbReference>
<dbReference type="GeneTree" id="ENSGT00940000159571"/>
<dbReference type="HOGENOM" id="CLU_013430_0_3_1"/>
<dbReference type="InParanoid" id="Q8NEW0"/>
<dbReference type="OMA" id="KWRANER"/>
<dbReference type="OrthoDB" id="78669at2759"/>
<dbReference type="PAN-GO" id="Q8NEW0">
    <property type="GO annotations" value="5 GO annotations based on evolutionary models"/>
</dbReference>
<dbReference type="PhylomeDB" id="Q8NEW0"/>
<dbReference type="TreeFam" id="TF315217"/>
<dbReference type="PathwayCommons" id="Q8NEW0"/>
<dbReference type="SignaLink" id="Q8NEW0"/>
<dbReference type="BioGRID-ORCS" id="148867">
    <property type="hits" value="15 hits in 1166 CRISPR screens"/>
</dbReference>
<dbReference type="ChiTaRS" id="SLC30A7">
    <property type="organism name" value="human"/>
</dbReference>
<dbReference type="GeneWiki" id="SLC30A7"/>
<dbReference type="GenomeRNAi" id="148867"/>
<dbReference type="Pharos" id="Q8NEW0">
    <property type="development level" value="Tbio"/>
</dbReference>
<dbReference type="PRO" id="PR:Q8NEW0"/>
<dbReference type="Proteomes" id="UP000005640">
    <property type="component" value="Chromosome 1"/>
</dbReference>
<dbReference type="RNAct" id="Q8NEW0">
    <property type="molecule type" value="protein"/>
</dbReference>
<dbReference type="Bgee" id="ENSG00000162695">
    <property type="expression patterns" value="Expressed in oviduct epithelium and 194 other cell types or tissues"/>
</dbReference>
<dbReference type="ExpressionAtlas" id="Q8NEW0">
    <property type="expression patterns" value="baseline and differential"/>
</dbReference>
<dbReference type="GO" id="GO:0005737">
    <property type="term" value="C:cytoplasm"/>
    <property type="evidence" value="ECO:0000314"/>
    <property type="project" value="BHF-UCL"/>
</dbReference>
<dbReference type="GO" id="GO:0031410">
    <property type="term" value="C:cytoplasmic vesicle"/>
    <property type="evidence" value="ECO:0000318"/>
    <property type="project" value="GO_Central"/>
</dbReference>
<dbReference type="GO" id="GO:0005794">
    <property type="term" value="C:Golgi apparatus"/>
    <property type="evidence" value="ECO:0000314"/>
    <property type="project" value="LIFEdb"/>
</dbReference>
<dbReference type="GO" id="GO:1990674">
    <property type="term" value="C:Golgi cis cisterna membrane"/>
    <property type="evidence" value="ECO:0000314"/>
    <property type="project" value="UniProtKB"/>
</dbReference>
<dbReference type="GO" id="GO:0000139">
    <property type="term" value="C:Golgi membrane"/>
    <property type="evidence" value="ECO:0007669"/>
    <property type="project" value="UniProtKB-SubCell"/>
</dbReference>
<dbReference type="GO" id="GO:0005739">
    <property type="term" value="C:mitochondrion"/>
    <property type="evidence" value="ECO:0000250"/>
    <property type="project" value="UniProtKB"/>
</dbReference>
<dbReference type="GO" id="GO:0048471">
    <property type="term" value="C:perinuclear region of cytoplasm"/>
    <property type="evidence" value="ECO:0007669"/>
    <property type="project" value="Ensembl"/>
</dbReference>
<dbReference type="GO" id="GO:0033017">
    <property type="term" value="C:sarcoplasmic reticulum membrane"/>
    <property type="evidence" value="ECO:0000250"/>
    <property type="project" value="UniProtKB"/>
</dbReference>
<dbReference type="GO" id="GO:0031982">
    <property type="term" value="C:vesicle"/>
    <property type="evidence" value="ECO:0000314"/>
    <property type="project" value="BHF-UCL"/>
</dbReference>
<dbReference type="GO" id="GO:0042802">
    <property type="term" value="F:identical protein binding"/>
    <property type="evidence" value="ECO:0000353"/>
    <property type="project" value="IntAct"/>
</dbReference>
<dbReference type="GO" id="GO:0005385">
    <property type="term" value="F:zinc ion transmembrane transporter activity"/>
    <property type="evidence" value="ECO:0000314"/>
    <property type="project" value="UniProtKB"/>
</dbReference>
<dbReference type="GO" id="GO:0006882">
    <property type="term" value="P:intracellular zinc ion homeostasis"/>
    <property type="evidence" value="ECO:0000318"/>
    <property type="project" value="GO_Central"/>
</dbReference>
<dbReference type="GO" id="GO:1904257">
    <property type="term" value="P:zinc ion import into Golgi lumen"/>
    <property type="evidence" value="ECO:0000314"/>
    <property type="project" value="UniProtKB"/>
</dbReference>
<dbReference type="Gene3D" id="1.20.1510.10">
    <property type="entry name" value="Cation efflux protein transmembrane domain"/>
    <property type="match status" value="1"/>
</dbReference>
<dbReference type="InterPro" id="IPR002524">
    <property type="entry name" value="Cation_efflux"/>
</dbReference>
<dbReference type="InterPro" id="IPR027469">
    <property type="entry name" value="Cation_efflux_TMD_sf"/>
</dbReference>
<dbReference type="InterPro" id="IPR045316">
    <property type="entry name" value="Msc2-like"/>
</dbReference>
<dbReference type="NCBIfam" id="TIGR01297">
    <property type="entry name" value="CDF"/>
    <property type="match status" value="1"/>
</dbReference>
<dbReference type="PANTHER" id="PTHR45755">
    <property type="match status" value="1"/>
</dbReference>
<dbReference type="PANTHER" id="PTHR45755:SF4">
    <property type="entry name" value="ZINC TRANSPORTER 7"/>
    <property type="match status" value="1"/>
</dbReference>
<dbReference type="Pfam" id="PF01545">
    <property type="entry name" value="Cation_efflux"/>
    <property type="match status" value="1"/>
</dbReference>
<dbReference type="SUPFAM" id="SSF161111">
    <property type="entry name" value="Cation efflux protein transmembrane domain-like"/>
    <property type="match status" value="1"/>
</dbReference>
<proteinExistence type="evidence at protein level"/>
<name>ZNT7_HUMAN</name>
<evidence type="ECO:0000250" key="1">
    <source>
        <dbReference type="UniProtKB" id="Q5BJM8"/>
    </source>
</evidence>
<evidence type="ECO:0000250" key="2">
    <source>
        <dbReference type="UniProtKB" id="Q9JKN1"/>
    </source>
</evidence>
<evidence type="ECO:0000255" key="3"/>
<evidence type="ECO:0000256" key="4">
    <source>
        <dbReference type="SAM" id="MobiDB-lite"/>
    </source>
</evidence>
<evidence type="ECO:0000269" key="5">
    <source>
    </source>
</evidence>
<evidence type="ECO:0000269" key="6">
    <source>
    </source>
</evidence>
<evidence type="ECO:0000269" key="7">
    <source>
    </source>
</evidence>
<evidence type="ECO:0000269" key="8">
    <source>
    </source>
</evidence>
<evidence type="ECO:0000303" key="9">
    <source>
    </source>
</evidence>
<evidence type="ECO:0000303" key="10">
    <source>
    </source>
</evidence>
<evidence type="ECO:0000305" key="11"/>
<evidence type="ECO:0000305" key="12">
    <source>
    </source>
</evidence>
<evidence type="ECO:0000312" key="13">
    <source>
        <dbReference type="EMBL" id="AAL83716.1"/>
    </source>
</evidence>
<evidence type="ECO:0000312" key="14">
    <source>
        <dbReference type="HGNC" id="HGNC:19306"/>
    </source>
</evidence>
<evidence type="ECO:0007829" key="15">
    <source>
        <dbReference type="PDB" id="8J7T"/>
    </source>
</evidence>
<evidence type="ECO:0007829" key="16">
    <source>
        <dbReference type="PDB" id="8J80"/>
    </source>
</evidence>
<sequence>MLPLSIKDDEYKPPKFNLFGKISGWFRSILSDKTSRNLFFFLCLNLSFAFVELLYGIWSNCLGLISDSFHMFFDSTAILAGLAASVISKWRDNDAFSYGYVRAEVLAGFVNGLFLIFTAFFIFSEGVERALAPPDVHHERLLLVSILGFVVNLIGIFVFKHGGHGHSHGSGHGHSHSLFNGALDQAHGHVDHCHSHEVKHGAAHSHDHAHGHGHFHSHDGPSLKETTGPSRQILQGVFLHILADTLGSIGVIASAIMMQNFGLMIADPICSILIAILIVVSVIPLLRESVGILMQRTPPLLENSLPQCYQRVQQLQGVYSLQEQHFWTLCSDVYVGTLKLIVAPDADARWILSQTHNIFTQAGVRQLYVQIDFAAM</sequence>